<accession>Q83QN3</accession>
<accession>Q7C0K4</accession>
<gene>
    <name type="primary">murP</name>
    <name type="ordered locus">SF2483</name>
    <name type="ordered locus">S2630</name>
</gene>
<evidence type="ECO:0000250" key="1">
    <source>
        <dbReference type="UniProtKB" id="P77272"/>
    </source>
</evidence>
<evidence type="ECO:0000255" key="2"/>
<evidence type="ECO:0000255" key="3">
    <source>
        <dbReference type="PROSITE-ProRule" id="PRU00421"/>
    </source>
</evidence>
<evidence type="ECO:0000255" key="4">
    <source>
        <dbReference type="PROSITE-ProRule" id="PRU00426"/>
    </source>
</evidence>
<organism>
    <name type="scientific">Shigella flexneri</name>
    <dbReference type="NCBI Taxonomy" id="623"/>
    <lineage>
        <taxon>Bacteria</taxon>
        <taxon>Pseudomonadati</taxon>
        <taxon>Pseudomonadota</taxon>
        <taxon>Gammaproteobacteria</taxon>
        <taxon>Enterobacterales</taxon>
        <taxon>Enterobacteriaceae</taxon>
        <taxon>Shigella</taxon>
    </lineage>
</organism>
<sequence>MAKEISSELLNTILTRVGGPGNIASCGNCMTRLRLGVHDSSLVDPNIKTLEGVKGVILTSDQVQVVFGPGKAHRAAKAMSELLGDAPVQDAAEIAAQNKRQLKAKQTSGVQQFLAKFATIFTPLIPGFIAAGLLLGIATLIATVMHVPADAQGTLPDALNFMKVFSKGLFTFLVILVGYNAAQAFGGTGVNGAIIAALFLLGYNPAATTGYYAGFHDFFGLPIDPRGNIIGVLIAAWACARIEGMVRRFMPDDLDMLLTSLITLLITATLAYLIIMPLGGWLFEGMSWLFMHLNSNPFGCAVLAGLFLIAVVFGVHQGFIPVYLALMDSQGFNSLFPILSMAGAGQVGAALALYWRAQPHSALRSQVRGAIIPGLLGVGEPLIYGVTLPRMKPFVTACLGGAAGGLFIGLIAWWGLPMGLNSAFGPSGLVALPLMTSAQGILPAMAVYAGGILVAWVCGFIFTTLFGCRNVNLD</sequence>
<name>PTYBC_SHIFL</name>
<reference key="1">
    <citation type="journal article" date="2002" name="Nucleic Acids Res.">
        <title>Genome sequence of Shigella flexneri 2a: insights into pathogenicity through comparison with genomes of Escherichia coli K12 and O157.</title>
        <authorList>
            <person name="Jin Q."/>
            <person name="Yuan Z."/>
            <person name="Xu J."/>
            <person name="Wang Y."/>
            <person name="Shen Y."/>
            <person name="Lu W."/>
            <person name="Wang J."/>
            <person name="Liu H."/>
            <person name="Yang J."/>
            <person name="Yang F."/>
            <person name="Zhang X."/>
            <person name="Zhang J."/>
            <person name="Yang G."/>
            <person name="Wu H."/>
            <person name="Qu D."/>
            <person name="Dong J."/>
            <person name="Sun L."/>
            <person name="Xue Y."/>
            <person name="Zhao A."/>
            <person name="Gao Y."/>
            <person name="Zhu J."/>
            <person name="Kan B."/>
            <person name="Ding K."/>
            <person name="Chen S."/>
            <person name="Cheng H."/>
            <person name="Yao Z."/>
            <person name="He B."/>
            <person name="Chen R."/>
            <person name="Ma D."/>
            <person name="Qiang B."/>
            <person name="Wen Y."/>
            <person name="Hou Y."/>
            <person name="Yu J."/>
        </authorList>
    </citation>
    <scope>NUCLEOTIDE SEQUENCE [LARGE SCALE GENOMIC DNA]</scope>
    <source>
        <strain>301 / Serotype 2a</strain>
    </source>
</reference>
<reference key="2">
    <citation type="journal article" date="2003" name="Infect. Immun.">
        <title>Complete genome sequence and comparative genomics of Shigella flexneri serotype 2a strain 2457T.</title>
        <authorList>
            <person name="Wei J."/>
            <person name="Goldberg M.B."/>
            <person name="Burland V."/>
            <person name="Venkatesan M.M."/>
            <person name="Deng W."/>
            <person name="Fournier G."/>
            <person name="Mayhew G.F."/>
            <person name="Plunkett G. III"/>
            <person name="Rose D.J."/>
            <person name="Darling A."/>
            <person name="Mau B."/>
            <person name="Perna N.T."/>
            <person name="Payne S.M."/>
            <person name="Runyen-Janecky L.J."/>
            <person name="Zhou S."/>
            <person name="Schwartz D.C."/>
            <person name="Blattner F.R."/>
        </authorList>
    </citation>
    <scope>NUCLEOTIDE SEQUENCE [LARGE SCALE GENOMIC DNA]</scope>
    <source>
        <strain>ATCC 700930 / 2457T / Serotype 2a</strain>
    </source>
</reference>
<feature type="chain" id="PRO_0000248960" description="PTS system N-acetylmuramic acid-specific EIIBC component">
    <location>
        <begin position="1"/>
        <end position="474"/>
    </location>
</feature>
<feature type="topological domain" description="Cytoplasmic" evidence="2">
    <location>
        <begin position="1"/>
        <end position="123"/>
    </location>
</feature>
<feature type="transmembrane region" description="Helical" evidence="4">
    <location>
        <begin position="124"/>
        <end position="144"/>
    </location>
</feature>
<feature type="topological domain" description="Periplasmic" evidence="2">
    <location>
        <begin position="145"/>
        <end position="157"/>
    </location>
</feature>
<feature type="transmembrane region" description="Helical" evidence="4">
    <location>
        <begin position="158"/>
        <end position="178"/>
    </location>
</feature>
<feature type="topological domain" description="Cytoplasmic" evidence="2">
    <location>
        <begin position="179"/>
        <end position="180"/>
    </location>
</feature>
<feature type="transmembrane region" description="Helical" evidence="4">
    <location>
        <begin position="181"/>
        <end position="201"/>
    </location>
</feature>
<feature type="topological domain" description="Periplasmic" evidence="2">
    <location>
        <begin position="202"/>
        <end position="217"/>
    </location>
</feature>
<feature type="transmembrane region" description="Helical" evidence="4">
    <location>
        <begin position="218"/>
        <end position="238"/>
    </location>
</feature>
<feature type="topological domain" description="Cytoplasmic" evidence="2">
    <location>
        <begin position="239"/>
        <end position="260"/>
    </location>
</feature>
<feature type="transmembrane region" description="Helical" evidence="4">
    <location>
        <begin position="261"/>
        <end position="281"/>
    </location>
</feature>
<feature type="topological domain" description="Periplasmic" evidence="2">
    <location>
        <begin position="282"/>
        <end position="301"/>
    </location>
</feature>
<feature type="transmembrane region" description="Helical" evidence="4">
    <location>
        <begin position="302"/>
        <end position="322"/>
    </location>
</feature>
<feature type="topological domain" description="Cytoplasmic" evidence="2">
    <location>
        <begin position="323"/>
        <end position="334"/>
    </location>
</feature>
<feature type="transmembrane region" description="Helical" evidence="4">
    <location>
        <begin position="335"/>
        <end position="355"/>
    </location>
</feature>
<feature type="topological domain" description="Periplasmic" evidence="2">
    <location>
        <begin position="356"/>
        <end position="368"/>
    </location>
</feature>
<feature type="transmembrane region" description="Helical" evidence="4">
    <location>
        <begin position="369"/>
        <end position="389"/>
    </location>
</feature>
<feature type="topological domain" description="Cytoplasmic" evidence="2">
    <location>
        <begin position="390"/>
        <end position="393"/>
    </location>
</feature>
<feature type="transmembrane region" description="Helical" evidence="4">
    <location>
        <begin position="394"/>
        <end position="414"/>
    </location>
</feature>
<feature type="topological domain" description="Periplasmic" evidence="2">
    <location>
        <begin position="415"/>
        <end position="440"/>
    </location>
</feature>
<feature type="transmembrane region" description="Helical" evidence="4">
    <location>
        <begin position="441"/>
        <end position="461"/>
    </location>
</feature>
<feature type="topological domain" description="Cytoplasmic" evidence="2">
    <location>
        <begin position="462"/>
        <end position="474"/>
    </location>
</feature>
<feature type="domain" description="PTS EIIB type-1" evidence="3">
    <location>
        <begin position="1"/>
        <end position="89"/>
    </location>
</feature>
<feature type="domain" description="PTS EIIC type-1" evidence="4">
    <location>
        <begin position="115"/>
        <end position="474"/>
    </location>
</feature>
<feature type="active site" description="Phosphocysteine intermediate; for EIIB activity" evidence="3">
    <location>
        <position position="29"/>
    </location>
</feature>
<proteinExistence type="inferred from homology"/>
<dbReference type="EC" id="2.7.1.192" evidence="1"/>
<dbReference type="EMBL" id="AE005674">
    <property type="protein sequence ID" value="AAN43988.1"/>
    <property type="molecule type" value="Genomic_DNA"/>
</dbReference>
<dbReference type="EMBL" id="AE014073">
    <property type="protein sequence ID" value="AAP17803.1"/>
    <property type="molecule type" value="Genomic_DNA"/>
</dbReference>
<dbReference type="RefSeq" id="NP_708281.1">
    <property type="nucleotide sequence ID" value="NC_004337.2"/>
</dbReference>
<dbReference type="RefSeq" id="WP_001040468.1">
    <property type="nucleotide sequence ID" value="NZ_WPGW01000057.1"/>
</dbReference>
<dbReference type="SMR" id="Q83QN3"/>
<dbReference type="STRING" id="198214.SF2483"/>
<dbReference type="PaxDb" id="198214-SF2483"/>
<dbReference type="GeneID" id="1025586"/>
<dbReference type="KEGG" id="sfl:SF2483"/>
<dbReference type="KEGG" id="sfx:S2630"/>
<dbReference type="PATRIC" id="fig|198214.7.peg.2967"/>
<dbReference type="HOGENOM" id="CLU_012312_2_0_6"/>
<dbReference type="Proteomes" id="UP000001006">
    <property type="component" value="Chromosome"/>
</dbReference>
<dbReference type="Proteomes" id="UP000002673">
    <property type="component" value="Chromosome"/>
</dbReference>
<dbReference type="GO" id="GO:0005886">
    <property type="term" value="C:plasma membrane"/>
    <property type="evidence" value="ECO:0007669"/>
    <property type="project" value="UniProtKB-SubCell"/>
</dbReference>
<dbReference type="GO" id="GO:0016301">
    <property type="term" value="F:kinase activity"/>
    <property type="evidence" value="ECO:0007669"/>
    <property type="project" value="UniProtKB-KW"/>
</dbReference>
<dbReference type="GO" id="GO:0008982">
    <property type="term" value="F:protein-N(PI)-phosphohistidine-sugar phosphotransferase activity"/>
    <property type="evidence" value="ECO:0007669"/>
    <property type="project" value="InterPro"/>
</dbReference>
<dbReference type="GO" id="GO:0090588">
    <property type="term" value="F:protein-phosphocysteine-N-acetylmuramate phosphotransferase system transporter activity"/>
    <property type="evidence" value="ECO:0007669"/>
    <property type="project" value="TreeGrafter"/>
</dbReference>
<dbReference type="GO" id="GO:0009401">
    <property type="term" value="P:phosphoenolpyruvate-dependent sugar phosphotransferase system"/>
    <property type="evidence" value="ECO:0007669"/>
    <property type="project" value="UniProtKB-KW"/>
</dbReference>
<dbReference type="CDD" id="cd00212">
    <property type="entry name" value="PTS_IIB_glc"/>
    <property type="match status" value="1"/>
</dbReference>
<dbReference type="FunFam" id="3.30.1360.60:FF:000001">
    <property type="entry name" value="PTS system glucose-specific IIBC component PtsG"/>
    <property type="match status" value="1"/>
</dbReference>
<dbReference type="Gene3D" id="3.30.1360.60">
    <property type="entry name" value="Glucose permease domain IIB"/>
    <property type="match status" value="1"/>
</dbReference>
<dbReference type="InterPro" id="IPR036878">
    <property type="entry name" value="Glu_permease_IIB"/>
</dbReference>
<dbReference type="InterPro" id="IPR018113">
    <property type="entry name" value="PTrfase_EIIB_Cys"/>
</dbReference>
<dbReference type="InterPro" id="IPR003352">
    <property type="entry name" value="PTS_EIIC"/>
</dbReference>
<dbReference type="InterPro" id="IPR013013">
    <property type="entry name" value="PTS_EIIC_1"/>
</dbReference>
<dbReference type="InterPro" id="IPR001996">
    <property type="entry name" value="PTS_IIB_1"/>
</dbReference>
<dbReference type="InterPro" id="IPR050558">
    <property type="entry name" value="PTS_Sugar-Specific_Components"/>
</dbReference>
<dbReference type="NCBIfam" id="NF007152">
    <property type="entry name" value="PRK09586.1"/>
    <property type="match status" value="1"/>
</dbReference>
<dbReference type="PANTHER" id="PTHR30175">
    <property type="entry name" value="PHOSPHOTRANSFERASE SYSTEM TRANSPORT PROTEIN"/>
    <property type="match status" value="1"/>
</dbReference>
<dbReference type="PANTHER" id="PTHR30175:SF3">
    <property type="entry name" value="PTS SYSTEM N-ACETYLMURAMIC ACID-SPECIFIC EIIBC COMPONENT"/>
    <property type="match status" value="1"/>
</dbReference>
<dbReference type="Pfam" id="PF00367">
    <property type="entry name" value="PTS_EIIB"/>
    <property type="match status" value="1"/>
</dbReference>
<dbReference type="Pfam" id="PF02378">
    <property type="entry name" value="PTS_EIIC"/>
    <property type="match status" value="1"/>
</dbReference>
<dbReference type="SUPFAM" id="SSF55604">
    <property type="entry name" value="Glucose permease domain IIB"/>
    <property type="match status" value="1"/>
</dbReference>
<dbReference type="PROSITE" id="PS51098">
    <property type="entry name" value="PTS_EIIB_TYPE_1"/>
    <property type="match status" value="1"/>
</dbReference>
<dbReference type="PROSITE" id="PS01035">
    <property type="entry name" value="PTS_EIIB_TYPE_1_CYS"/>
    <property type="match status" value="1"/>
</dbReference>
<dbReference type="PROSITE" id="PS51103">
    <property type="entry name" value="PTS_EIIC_TYPE_1"/>
    <property type="match status" value="1"/>
</dbReference>
<keyword id="KW-0997">Cell inner membrane</keyword>
<keyword id="KW-1003">Cell membrane</keyword>
<keyword id="KW-0418">Kinase</keyword>
<keyword id="KW-0472">Membrane</keyword>
<keyword id="KW-0598">Phosphotransferase system</keyword>
<keyword id="KW-1185">Reference proteome</keyword>
<keyword id="KW-0762">Sugar transport</keyword>
<keyword id="KW-0808">Transferase</keyword>
<keyword id="KW-0812">Transmembrane</keyword>
<keyword id="KW-1133">Transmembrane helix</keyword>
<keyword id="KW-0813">Transport</keyword>
<protein>
    <recommendedName>
        <fullName evidence="1">PTS system N-acetylmuramic acid-specific EIIBC component</fullName>
    </recommendedName>
    <alternativeName>
        <fullName evidence="1">EIIBC-MurNAc</fullName>
    </alternativeName>
    <domain>
        <recommendedName>
            <fullName evidence="1">N-acetylmuramic acid-specific phosphotransferase enzyme IIB component</fullName>
            <ecNumber evidence="1">2.7.1.192</ecNumber>
        </recommendedName>
        <alternativeName>
            <fullName evidence="1">PTS system N-acetylmuramic acid-specific EIIB component</fullName>
        </alternativeName>
    </domain>
    <domain>
        <recommendedName>
            <fullName evidence="1">N-acetylmuramic acid permease IIC component</fullName>
        </recommendedName>
        <alternativeName>
            <fullName evidence="1">PTS system N-acetylmuramic acid-specific EIIC component</fullName>
        </alternativeName>
    </domain>
</protein>
<comment type="function">
    <text evidence="1">The phosphoenolpyruvate-dependent sugar phosphotransferase system (sugar PTS), a major carbohydrate active transport system, catalyzes the phosphorylation of incoming sugar substrates concomitantly with their translocation across the cell membrane. This system is involved in N-acetylmuramic acid (MurNAc) transport, yielding cytoplasmic MurNAc-6-P. Is also able to take up anhydro-N-acetylmuramic acid (anhMurNAc), but cannot phosphorylate the carbon 6, probably because of the 1,6-anhydro ring.</text>
</comment>
<comment type="catalytic activity">
    <reaction evidence="1">
        <text>N-acetyl-beta-D-muramate(out) + N(pros)-phospho-L-histidyl-[protein] = N-acetyl-beta-D-muramate 6-phosphate(in) + L-histidyl-[protein]</text>
        <dbReference type="Rhea" id="RHEA:33399"/>
        <dbReference type="Rhea" id="RHEA-COMP:9745"/>
        <dbReference type="Rhea" id="RHEA-COMP:9746"/>
        <dbReference type="ChEBI" id="CHEBI:29979"/>
        <dbReference type="ChEBI" id="CHEBI:58721"/>
        <dbReference type="ChEBI" id="CHEBI:64837"/>
        <dbReference type="ChEBI" id="CHEBI:64848"/>
        <dbReference type="EC" id="2.7.1.192"/>
    </reaction>
</comment>
<comment type="subcellular location">
    <subcellularLocation>
        <location evidence="4">Cell inner membrane</location>
        <topology evidence="4">Multi-pass membrane protein</topology>
    </subcellularLocation>
</comment>
<comment type="domain">
    <text evidence="3">The EIIB domain is phosphorylated by phospho-EIIA on a cysteinyl or histidyl residue, depending on the transported sugar. Then, it transfers the phosphoryl group to the sugar substrate concomitantly with the sugar uptake processed by the EIIC domain.</text>
</comment>
<comment type="domain">
    <text evidence="4">The EIIC domain forms the PTS system translocation channel and contains the specific substrate-binding site.</text>
</comment>